<comment type="function">
    <text evidence="1">Catalyzes the attachment of proline to tRNA(Pro) in a two-step reaction: proline is first activated by ATP to form Pro-AMP and then transferred to the acceptor end of tRNA(Pro). As ProRS can inadvertently accommodate and process non-cognate amino acids such as alanine and cysteine, to avoid such errors it has two additional distinct editing activities against alanine. One activity is designated as 'pretransfer' editing and involves the tRNA(Pro)-independent hydrolysis of activated Ala-AMP. The other activity is designated 'posttransfer' editing and involves deacylation of mischarged Ala-tRNA(Pro). The misacylated Cys-tRNA(Pro) is not edited by ProRS.</text>
</comment>
<comment type="catalytic activity">
    <reaction evidence="1">
        <text>tRNA(Pro) + L-proline + ATP = L-prolyl-tRNA(Pro) + AMP + diphosphate</text>
        <dbReference type="Rhea" id="RHEA:14305"/>
        <dbReference type="Rhea" id="RHEA-COMP:9700"/>
        <dbReference type="Rhea" id="RHEA-COMP:9702"/>
        <dbReference type="ChEBI" id="CHEBI:30616"/>
        <dbReference type="ChEBI" id="CHEBI:33019"/>
        <dbReference type="ChEBI" id="CHEBI:60039"/>
        <dbReference type="ChEBI" id="CHEBI:78442"/>
        <dbReference type="ChEBI" id="CHEBI:78532"/>
        <dbReference type="ChEBI" id="CHEBI:456215"/>
        <dbReference type="EC" id="6.1.1.15"/>
    </reaction>
</comment>
<comment type="subunit">
    <text evidence="1">Homodimer.</text>
</comment>
<comment type="subcellular location">
    <subcellularLocation>
        <location evidence="1">Cytoplasm</location>
    </subcellularLocation>
</comment>
<comment type="domain">
    <text evidence="1">Consists of three domains: the N-terminal catalytic domain, the editing domain and the C-terminal anticodon-binding domain.</text>
</comment>
<comment type="similarity">
    <text evidence="1">Belongs to the class-II aminoacyl-tRNA synthetase family. ProS type 1 subfamily.</text>
</comment>
<evidence type="ECO:0000255" key="1">
    <source>
        <dbReference type="HAMAP-Rule" id="MF_01569"/>
    </source>
</evidence>
<sequence>MRTSQYLLSTLKETPADAEVISHQLMLRAGMIRKLASGLYTWLPTGLRVLKKVENIVREEMNNAGAIEVSMPVVQPADLWQESGRWEQYGPELLRFVDRGERPFVLGPTHEEVITDLVRNELSSYKQLPLNFFQIQTKFRDEVRPRFGVMRSREFLMKDAYSFHTSQESLQETYDAMYAAYSRIFSRMGLDFRAVQADTGSIGGNASHEFQVLAQSGEDDIVFSDVSDYAANIELAEAIAPQTPRAAATQEMTLVDTPNAKTIAELVEQFNLPIEKTVKTLLVKAVKDSKSPLVALLVRGDHELNEVKAEKLPHVASPLTFATEEEIRAVINAGPGSLGPVNMPIPVIIDRTVAAMSDFAAGANIDGKHYFGINWDRDVATPVVADIRNVVAGDPSPDGQGTLLIKRGIEVGHIFQLGTKYSEALKASVQGEDGRNQILTMGCYGIGVTRVVAAAIEQNFDERGIVWPDAIAPFQVAILPMNMHKSFRVQELAEKLYSELRAQGIEVLMDDRKERPGVMFADMELIGIPHTIVIGDRNLDNDDIEYKYRRSGEKSLIKTGDIVDYLVKAIKG</sequence>
<reference key="1">
    <citation type="journal article" date="2001" name="Nature">
        <title>Complete genome sequence of a multiple drug resistant Salmonella enterica serovar Typhi CT18.</title>
        <authorList>
            <person name="Parkhill J."/>
            <person name="Dougan G."/>
            <person name="James K.D."/>
            <person name="Thomson N.R."/>
            <person name="Pickard D."/>
            <person name="Wain J."/>
            <person name="Churcher C.M."/>
            <person name="Mungall K.L."/>
            <person name="Bentley S.D."/>
            <person name="Holden M.T.G."/>
            <person name="Sebaihia M."/>
            <person name="Baker S."/>
            <person name="Basham D."/>
            <person name="Brooks K."/>
            <person name="Chillingworth T."/>
            <person name="Connerton P."/>
            <person name="Cronin A."/>
            <person name="Davis P."/>
            <person name="Davies R.M."/>
            <person name="Dowd L."/>
            <person name="White N."/>
            <person name="Farrar J."/>
            <person name="Feltwell T."/>
            <person name="Hamlin N."/>
            <person name="Haque A."/>
            <person name="Hien T.T."/>
            <person name="Holroyd S."/>
            <person name="Jagels K."/>
            <person name="Krogh A."/>
            <person name="Larsen T.S."/>
            <person name="Leather S."/>
            <person name="Moule S."/>
            <person name="O'Gaora P."/>
            <person name="Parry C."/>
            <person name="Quail M.A."/>
            <person name="Rutherford K.M."/>
            <person name="Simmonds M."/>
            <person name="Skelton J."/>
            <person name="Stevens K."/>
            <person name="Whitehead S."/>
            <person name="Barrell B.G."/>
        </authorList>
    </citation>
    <scope>NUCLEOTIDE SEQUENCE [LARGE SCALE GENOMIC DNA]</scope>
    <source>
        <strain>CT18</strain>
    </source>
</reference>
<reference key="2">
    <citation type="journal article" date="2003" name="J. Bacteriol.">
        <title>Comparative genomics of Salmonella enterica serovar Typhi strains Ty2 and CT18.</title>
        <authorList>
            <person name="Deng W."/>
            <person name="Liou S.-R."/>
            <person name="Plunkett G. III"/>
            <person name="Mayhew G.F."/>
            <person name="Rose D.J."/>
            <person name="Burland V."/>
            <person name="Kodoyianni V."/>
            <person name="Schwartz D.C."/>
            <person name="Blattner F.R."/>
        </authorList>
    </citation>
    <scope>NUCLEOTIDE SEQUENCE [LARGE SCALE GENOMIC DNA]</scope>
    <source>
        <strain>ATCC 700931 / Ty2</strain>
    </source>
</reference>
<keyword id="KW-0030">Aminoacyl-tRNA synthetase</keyword>
<keyword id="KW-0067">ATP-binding</keyword>
<keyword id="KW-0963">Cytoplasm</keyword>
<keyword id="KW-0436">Ligase</keyword>
<keyword id="KW-0547">Nucleotide-binding</keyword>
<keyword id="KW-0648">Protein biosynthesis</keyword>
<name>SYP_SALTI</name>
<dbReference type="EC" id="6.1.1.15" evidence="1"/>
<dbReference type="EMBL" id="AL513382">
    <property type="protein sequence ID" value="CAD08702.1"/>
    <property type="molecule type" value="Genomic_DNA"/>
</dbReference>
<dbReference type="EMBL" id="AE014613">
    <property type="protein sequence ID" value="AAO67974.1"/>
    <property type="molecule type" value="Genomic_DNA"/>
</dbReference>
<dbReference type="RefSeq" id="NP_454851.1">
    <property type="nucleotide sequence ID" value="NC_003198.1"/>
</dbReference>
<dbReference type="RefSeq" id="WP_001260683.1">
    <property type="nucleotide sequence ID" value="NZ_WSUR01000065.1"/>
</dbReference>
<dbReference type="SMR" id="Q8XEY9"/>
<dbReference type="STRING" id="220341.gene:17584300"/>
<dbReference type="ChEMBL" id="CHEMBL5169239"/>
<dbReference type="KEGG" id="stt:t0245"/>
<dbReference type="KEGG" id="sty:STY0269"/>
<dbReference type="PATRIC" id="fig|220341.7.peg.270"/>
<dbReference type="eggNOG" id="COG0442">
    <property type="taxonomic scope" value="Bacteria"/>
</dbReference>
<dbReference type="HOGENOM" id="CLU_016739_0_0_6"/>
<dbReference type="OMA" id="NCDYAAN"/>
<dbReference type="OrthoDB" id="9809052at2"/>
<dbReference type="Proteomes" id="UP000000541">
    <property type="component" value="Chromosome"/>
</dbReference>
<dbReference type="Proteomes" id="UP000002670">
    <property type="component" value="Chromosome"/>
</dbReference>
<dbReference type="GO" id="GO:0005829">
    <property type="term" value="C:cytosol"/>
    <property type="evidence" value="ECO:0007669"/>
    <property type="project" value="TreeGrafter"/>
</dbReference>
<dbReference type="GO" id="GO:0002161">
    <property type="term" value="F:aminoacyl-tRNA deacylase activity"/>
    <property type="evidence" value="ECO:0007669"/>
    <property type="project" value="InterPro"/>
</dbReference>
<dbReference type="GO" id="GO:0005524">
    <property type="term" value="F:ATP binding"/>
    <property type="evidence" value="ECO:0007669"/>
    <property type="project" value="UniProtKB-UniRule"/>
</dbReference>
<dbReference type="GO" id="GO:0004827">
    <property type="term" value="F:proline-tRNA ligase activity"/>
    <property type="evidence" value="ECO:0007669"/>
    <property type="project" value="UniProtKB-UniRule"/>
</dbReference>
<dbReference type="GO" id="GO:0006433">
    <property type="term" value="P:prolyl-tRNA aminoacylation"/>
    <property type="evidence" value="ECO:0007669"/>
    <property type="project" value="UniProtKB-UniRule"/>
</dbReference>
<dbReference type="CDD" id="cd04334">
    <property type="entry name" value="ProRS-INS"/>
    <property type="match status" value="1"/>
</dbReference>
<dbReference type="CDD" id="cd00861">
    <property type="entry name" value="ProRS_anticodon_short"/>
    <property type="match status" value="1"/>
</dbReference>
<dbReference type="CDD" id="cd00779">
    <property type="entry name" value="ProRS_core_prok"/>
    <property type="match status" value="1"/>
</dbReference>
<dbReference type="FunFam" id="3.30.930.10:FF:000012">
    <property type="entry name" value="Proline--tRNA ligase"/>
    <property type="match status" value="1"/>
</dbReference>
<dbReference type="FunFam" id="3.30.930.10:FF:000097">
    <property type="entry name" value="Proline--tRNA ligase"/>
    <property type="match status" value="1"/>
</dbReference>
<dbReference type="FunFam" id="3.40.50.800:FF:000006">
    <property type="entry name" value="Proline--tRNA ligase"/>
    <property type="match status" value="1"/>
</dbReference>
<dbReference type="FunFam" id="3.90.960.10:FF:000001">
    <property type="entry name" value="Proline--tRNA ligase"/>
    <property type="match status" value="1"/>
</dbReference>
<dbReference type="Gene3D" id="3.40.50.800">
    <property type="entry name" value="Anticodon-binding domain"/>
    <property type="match status" value="1"/>
</dbReference>
<dbReference type="Gene3D" id="3.30.930.10">
    <property type="entry name" value="Bira Bifunctional Protein, Domain 2"/>
    <property type="match status" value="2"/>
</dbReference>
<dbReference type="Gene3D" id="3.90.960.10">
    <property type="entry name" value="YbaK/aminoacyl-tRNA synthetase-associated domain"/>
    <property type="match status" value="1"/>
</dbReference>
<dbReference type="HAMAP" id="MF_01569">
    <property type="entry name" value="Pro_tRNA_synth_type1"/>
    <property type="match status" value="1"/>
</dbReference>
<dbReference type="InterPro" id="IPR002314">
    <property type="entry name" value="aa-tRNA-synt_IIb"/>
</dbReference>
<dbReference type="InterPro" id="IPR006195">
    <property type="entry name" value="aa-tRNA-synth_II"/>
</dbReference>
<dbReference type="InterPro" id="IPR045864">
    <property type="entry name" value="aa-tRNA-synth_II/BPL/LPL"/>
</dbReference>
<dbReference type="InterPro" id="IPR004154">
    <property type="entry name" value="Anticodon-bd"/>
</dbReference>
<dbReference type="InterPro" id="IPR036621">
    <property type="entry name" value="Anticodon-bd_dom_sf"/>
</dbReference>
<dbReference type="InterPro" id="IPR002316">
    <property type="entry name" value="Pro-tRNA-ligase_IIa"/>
</dbReference>
<dbReference type="InterPro" id="IPR004500">
    <property type="entry name" value="Pro-tRNA-synth_IIa_bac-type"/>
</dbReference>
<dbReference type="InterPro" id="IPR023717">
    <property type="entry name" value="Pro-tRNA-Synthase_IIa_type1"/>
</dbReference>
<dbReference type="InterPro" id="IPR050062">
    <property type="entry name" value="Pro-tRNA_synthetase"/>
</dbReference>
<dbReference type="InterPro" id="IPR044140">
    <property type="entry name" value="ProRS_anticodon_short"/>
</dbReference>
<dbReference type="InterPro" id="IPR033730">
    <property type="entry name" value="ProRS_core_prok"/>
</dbReference>
<dbReference type="InterPro" id="IPR036754">
    <property type="entry name" value="YbaK/aa-tRNA-synt-asso_dom_sf"/>
</dbReference>
<dbReference type="InterPro" id="IPR007214">
    <property type="entry name" value="YbaK/aa-tRNA-synth-assoc-dom"/>
</dbReference>
<dbReference type="NCBIfam" id="NF006625">
    <property type="entry name" value="PRK09194.1"/>
    <property type="match status" value="1"/>
</dbReference>
<dbReference type="NCBIfam" id="TIGR00409">
    <property type="entry name" value="proS_fam_II"/>
    <property type="match status" value="1"/>
</dbReference>
<dbReference type="PANTHER" id="PTHR42753">
    <property type="entry name" value="MITOCHONDRIAL RIBOSOME PROTEIN L39/PROLYL-TRNA LIGASE FAMILY MEMBER"/>
    <property type="match status" value="1"/>
</dbReference>
<dbReference type="PANTHER" id="PTHR42753:SF2">
    <property type="entry name" value="PROLINE--TRNA LIGASE"/>
    <property type="match status" value="1"/>
</dbReference>
<dbReference type="Pfam" id="PF03129">
    <property type="entry name" value="HGTP_anticodon"/>
    <property type="match status" value="1"/>
</dbReference>
<dbReference type="Pfam" id="PF00587">
    <property type="entry name" value="tRNA-synt_2b"/>
    <property type="match status" value="1"/>
</dbReference>
<dbReference type="Pfam" id="PF04073">
    <property type="entry name" value="tRNA_edit"/>
    <property type="match status" value="1"/>
</dbReference>
<dbReference type="PIRSF" id="PIRSF001535">
    <property type="entry name" value="ProRS_1"/>
    <property type="match status" value="1"/>
</dbReference>
<dbReference type="PRINTS" id="PR01046">
    <property type="entry name" value="TRNASYNTHPRO"/>
</dbReference>
<dbReference type="SUPFAM" id="SSF52954">
    <property type="entry name" value="Class II aaRS ABD-related"/>
    <property type="match status" value="1"/>
</dbReference>
<dbReference type="SUPFAM" id="SSF55681">
    <property type="entry name" value="Class II aaRS and biotin synthetases"/>
    <property type="match status" value="1"/>
</dbReference>
<dbReference type="SUPFAM" id="SSF55826">
    <property type="entry name" value="YbaK/ProRS associated domain"/>
    <property type="match status" value="1"/>
</dbReference>
<dbReference type="PROSITE" id="PS50862">
    <property type="entry name" value="AA_TRNA_LIGASE_II"/>
    <property type="match status" value="1"/>
</dbReference>
<gene>
    <name evidence="1" type="primary">proS</name>
    <name type="ordered locus">STY0269</name>
    <name type="ordered locus">t0245</name>
</gene>
<proteinExistence type="inferred from homology"/>
<protein>
    <recommendedName>
        <fullName evidence="1">Proline--tRNA ligase</fullName>
        <ecNumber evidence="1">6.1.1.15</ecNumber>
    </recommendedName>
    <alternativeName>
        <fullName evidence="1">Prolyl-tRNA synthetase</fullName>
        <shortName evidence="1">ProRS</shortName>
    </alternativeName>
</protein>
<organism>
    <name type="scientific">Salmonella typhi</name>
    <dbReference type="NCBI Taxonomy" id="90370"/>
    <lineage>
        <taxon>Bacteria</taxon>
        <taxon>Pseudomonadati</taxon>
        <taxon>Pseudomonadota</taxon>
        <taxon>Gammaproteobacteria</taxon>
        <taxon>Enterobacterales</taxon>
        <taxon>Enterobacteriaceae</taxon>
        <taxon>Salmonella</taxon>
    </lineage>
</organism>
<feature type="chain" id="PRO_0000248760" description="Proline--tRNA ligase">
    <location>
        <begin position="1"/>
        <end position="572"/>
    </location>
</feature>
<accession>Q8XEY9</accession>
<accession>Q7ANJ6</accession>